<accession>Q9VTX8</accession>
<dbReference type="EMBL" id="AE014296">
    <property type="protein sequence ID" value="AAF49917.2"/>
    <property type="molecule type" value="Genomic_DNA"/>
</dbReference>
<dbReference type="RefSeq" id="NP_001287048.1">
    <property type="nucleotide sequence ID" value="NM_001300119.1"/>
</dbReference>
<dbReference type="RefSeq" id="NP_648576.1">
    <property type="nucleotide sequence ID" value="NM_140319.3"/>
</dbReference>
<dbReference type="BioGRID" id="64770">
    <property type="interactions" value="11"/>
</dbReference>
<dbReference type="DIP" id="DIP-18545N"/>
<dbReference type="FunCoup" id="Q9VTX8">
    <property type="interactions" value="1322"/>
</dbReference>
<dbReference type="IntAct" id="Q9VTX8">
    <property type="interactions" value="49"/>
</dbReference>
<dbReference type="STRING" id="7227.FBpp0301023"/>
<dbReference type="PaxDb" id="7227-FBpp0301023"/>
<dbReference type="DNASU" id="39420"/>
<dbReference type="EnsemblMetazoa" id="FBtr0075956">
    <property type="protein sequence ID" value="FBpp0075688"/>
    <property type="gene ID" value="FBgn0036286"/>
</dbReference>
<dbReference type="EnsemblMetazoa" id="FBtr0346569">
    <property type="protein sequence ID" value="FBpp0312167"/>
    <property type="gene ID" value="FBgn0036286"/>
</dbReference>
<dbReference type="GeneID" id="39420"/>
<dbReference type="KEGG" id="dme:Dmel_CG10616"/>
<dbReference type="UCSC" id="CG10616-RA">
    <property type="organism name" value="d. melanogaster"/>
</dbReference>
<dbReference type="AGR" id="FB:FBgn0036286"/>
<dbReference type="FlyBase" id="FBgn0036286">
    <property type="gene designation" value="CG10616"/>
</dbReference>
<dbReference type="VEuPathDB" id="VectorBase:FBgn0036286"/>
<dbReference type="eggNOG" id="KOG4703">
    <property type="taxonomic scope" value="Eukaryota"/>
</dbReference>
<dbReference type="HOGENOM" id="CLU_554629_0_0_1"/>
<dbReference type="InParanoid" id="Q9VTX8"/>
<dbReference type="OrthoDB" id="21458at2759"/>
<dbReference type="PhylomeDB" id="Q9VTX8"/>
<dbReference type="BioGRID-ORCS" id="39420">
    <property type="hits" value="0 hits in 1 CRISPR screen"/>
</dbReference>
<dbReference type="GenomeRNAi" id="39420"/>
<dbReference type="PRO" id="PR:Q9VTX8"/>
<dbReference type="Proteomes" id="UP000000803">
    <property type="component" value="Chromosome 3L"/>
</dbReference>
<dbReference type="Bgee" id="FBgn0036286">
    <property type="expression patterns" value="Expressed in early elongation stage spermatid (Drosophila) in testis and 162 other cell types or tissues"/>
</dbReference>
<dbReference type="ExpressionAtlas" id="Q9VTX8">
    <property type="expression patterns" value="baseline and differential"/>
</dbReference>
<dbReference type="GO" id="GO:0012505">
    <property type="term" value="C:endomembrane system"/>
    <property type="evidence" value="ECO:0007005"/>
    <property type="project" value="FlyBase"/>
</dbReference>
<dbReference type="GO" id="GO:0016020">
    <property type="term" value="C:membrane"/>
    <property type="evidence" value="ECO:0007669"/>
    <property type="project" value="UniProtKB-SubCell"/>
</dbReference>
<dbReference type="GO" id="GO:0008104">
    <property type="term" value="P:protein localization"/>
    <property type="evidence" value="ECO:0000318"/>
    <property type="project" value="GO_Central"/>
</dbReference>
<dbReference type="InterPro" id="IPR029454">
    <property type="entry name" value="ODR-4-like"/>
</dbReference>
<dbReference type="PANTHER" id="PTHR33966">
    <property type="entry name" value="PROTEIN ODR-4 HOMOLOG"/>
    <property type="match status" value="1"/>
</dbReference>
<dbReference type="PANTHER" id="PTHR33966:SF1">
    <property type="entry name" value="PROTEIN ODR-4 HOMOLOG"/>
    <property type="match status" value="1"/>
</dbReference>
<dbReference type="Pfam" id="PF14778">
    <property type="entry name" value="ODR4-like"/>
    <property type="match status" value="1"/>
</dbReference>
<protein>
    <recommendedName>
        <fullName>Protein odr-4 homolog</fullName>
    </recommendedName>
</protein>
<name>ODR4_DROME</name>
<organism>
    <name type="scientific">Drosophila melanogaster</name>
    <name type="common">Fruit fly</name>
    <dbReference type="NCBI Taxonomy" id="7227"/>
    <lineage>
        <taxon>Eukaryota</taxon>
        <taxon>Metazoa</taxon>
        <taxon>Ecdysozoa</taxon>
        <taxon>Arthropoda</taxon>
        <taxon>Hexapoda</taxon>
        <taxon>Insecta</taxon>
        <taxon>Pterygota</taxon>
        <taxon>Neoptera</taxon>
        <taxon>Endopterygota</taxon>
        <taxon>Diptera</taxon>
        <taxon>Brachycera</taxon>
        <taxon>Muscomorpha</taxon>
        <taxon>Ephydroidea</taxon>
        <taxon>Drosophilidae</taxon>
        <taxon>Drosophila</taxon>
        <taxon>Sophophora</taxon>
    </lineage>
</organism>
<reference key="1">
    <citation type="journal article" date="2000" name="Science">
        <title>The genome sequence of Drosophila melanogaster.</title>
        <authorList>
            <person name="Adams M.D."/>
            <person name="Celniker S.E."/>
            <person name="Holt R.A."/>
            <person name="Evans C.A."/>
            <person name="Gocayne J.D."/>
            <person name="Amanatides P.G."/>
            <person name="Scherer S.E."/>
            <person name="Li P.W."/>
            <person name="Hoskins R.A."/>
            <person name="Galle R.F."/>
            <person name="George R.A."/>
            <person name="Lewis S.E."/>
            <person name="Richards S."/>
            <person name="Ashburner M."/>
            <person name="Henderson S.N."/>
            <person name="Sutton G.G."/>
            <person name="Wortman J.R."/>
            <person name="Yandell M.D."/>
            <person name="Zhang Q."/>
            <person name="Chen L.X."/>
            <person name="Brandon R.C."/>
            <person name="Rogers Y.-H.C."/>
            <person name="Blazej R.G."/>
            <person name="Champe M."/>
            <person name="Pfeiffer B.D."/>
            <person name="Wan K.H."/>
            <person name="Doyle C."/>
            <person name="Baxter E.G."/>
            <person name="Helt G."/>
            <person name="Nelson C.R."/>
            <person name="Miklos G.L.G."/>
            <person name="Abril J.F."/>
            <person name="Agbayani A."/>
            <person name="An H.-J."/>
            <person name="Andrews-Pfannkoch C."/>
            <person name="Baldwin D."/>
            <person name="Ballew R.M."/>
            <person name="Basu A."/>
            <person name="Baxendale J."/>
            <person name="Bayraktaroglu L."/>
            <person name="Beasley E.M."/>
            <person name="Beeson K.Y."/>
            <person name="Benos P.V."/>
            <person name="Berman B.P."/>
            <person name="Bhandari D."/>
            <person name="Bolshakov S."/>
            <person name="Borkova D."/>
            <person name="Botchan M.R."/>
            <person name="Bouck J."/>
            <person name="Brokstein P."/>
            <person name="Brottier P."/>
            <person name="Burtis K.C."/>
            <person name="Busam D.A."/>
            <person name="Butler H."/>
            <person name="Cadieu E."/>
            <person name="Center A."/>
            <person name="Chandra I."/>
            <person name="Cherry J.M."/>
            <person name="Cawley S."/>
            <person name="Dahlke C."/>
            <person name="Davenport L.B."/>
            <person name="Davies P."/>
            <person name="de Pablos B."/>
            <person name="Delcher A."/>
            <person name="Deng Z."/>
            <person name="Mays A.D."/>
            <person name="Dew I."/>
            <person name="Dietz S.M."/>
            <person name="Dodson K."/>
            <person name="Doup L.E."/>
            <person name="Downes M."/>
            <person name="Dugan-Rocha S."/>
            <person name="Dunkov B.C."/>
            <person name="Dunn P."/>
            <person name="Durbin K.J."/>
            <person name="Evangelista C.C."/>
            <person name="Ferraz C."/>
            <person name="Ferriera S."/>
            <person name="Fleischmann W."/>
            <person name="Fosler C."/>
            <person name="Gabrielian A.E."/>
            <person name="Garg N.S."/>
            <person name="Gelbart W.M."/>
            <person name="Glasser K."/>
            <person name="Glodek A."/>
            <person name="Gong F."/>
            <person name="Gorrell J.H."/>
            <person name="Gu Z."/>
            <person name="Guan P."/>
            <person name="Harris M."/>
            <person name="Harris N.L."/>
            <person name="Harvey D.A."/>
            <person name="Heiman T.J."/>
            <person name="Hernandez J.R."/>
            <person name="Houck J."/>
            <person name="Hostin D."/>
            <person name="Houston K.A."/>
            <person name="Howland T.J."/>
            <person name="Wei M.-H."/>
            <person name="Ibegwam C."/>
            <person name="Jalali M."/>
            <person name="Kalush F."/>
            <person name="Karpen G.H."/>
            <person name="Ke Z."/>
            <person name="Kennison J.A."/>
            <person name="Ketchum K.A."/>
            <person name="Kimmel B.E."/>
            <person name="Kodira C.D."/>
            <person name="Kraft C.L."/>
            <person name="Kravitz S."/>
            <person name="Kulp D."/>
            <person name="Lai Z."/>
            <person name="Lasko P."/>
            <person name="Lei Y."/>
            <person name="Levitsky A.A."/>
            <person name="Li J.H."/>
            <person name="Li Z."/>
            <person name="Liang Y."/>
            <person name="Lin X."/>
            <person name="Liu X."/>
            <person name="Mattei B."/>
            <person name="McIntosh T.C."/>
            <person name="McLeod M.P."/>
            <person name="McPherson D."/>
            <person name="Merkulov G."/>
            <person name="Milshina N.V."/>
            <person name="Mobarry C."/>
            <person name="Morris J."/>
            <person name="Moshrefi A."/>
            <person name="Mount S.M."/>
            <person name="Moy M."/>
            <person name="Murphy B."/>
            <person name="Murphy L."/>
            <person name="Muzny D.M."/>
            <person name="Nelson D.L."/>
            <person name="Nelson D.R."/>
            <person name="Nelson K.A."/>
            <person name="Nixon K."/>
            <person name="Nusskern D.R."/>
            <person name="Pacleb J.M."/>
            <person name="Palazzolo M."/>
            <person name="Pittman G.S."/>
            <person name="Pan S."/>
            <person name="Pollard J."/>
            <person name="Puri V."/>
            <person name="Reese M.G."/>
            <person name="Reinert K."/>
            <person name="Remington K."/>
            <person name="Saunders R.D.C."/>
            <person name="Scheeler F."/>
            <person name="Shen H."/>
            <person name="Shue B.C."/>
            <person name="Siden-Kiamos I."/>
            <person name="Simpson M."/>
            <person name="Skupski M.P."/>
            <person name="Smith T.J."/>
            <person name="Spier E."/>
            <person name="Spradling A.C."/>
            <person name="Stapleton M."/>
            <person name="Strong R."/>
            <person name="Sun E."/>
            <person name="Svirskas R."/>
            <person name="Tector C."/>
            <person name="Turner R."/>
            <person name="Venter E."/>
            <person name="Wang A.H."/>
            <person name="Wang X."/>
            <person name="Wang Z.-Y."/>
            <person name="Wassarman D.A."/>
            <person name="Weinstock G.M."/>
            <person name="Weissenbach J."/>
            <person name="Williams S.M."/>
            <person name="Woodage T."/>
            <person name="Worley K.C."/>
            <person name="Wu D."/>
            <person name="Yang S."/>
            <person name="Yao Q.A."/>
            <person name="Ye J."/>
            <person name="Yeh R.-F."/>
            <person name="Zaveri J.S."/>
            <person name="Zhan M."/>
            <person name="Zhang G."/>
            <person name="Zhao Q."/>
            <person name="Zheng L."/>
            <person name="Zheng X.H."/>
            <person name="Zhong F.N."/>
            <person name="Zhong W."/>
            <person name="Zhou X."/>
            <person name="Zhu S.C."/>
            <person name="Zhu X."/>
            <person name="Smith H.O."/>
            <person name="Gibbs R.A."/>
            <person name="Myers E.W."/>
            <person name="Rubin G.M."/>
            <person name="Venter J.C."/>
        </authorList>
    </citation>
    <scope>NUCLEOTIDE SEQUENCE [LARGE SCALE GENOMIC DNA]</scope>
    <source>
        <strain>Berkeley</strain>
    </source>
</reference>
<reference key="2">
    <citation type="journal article" date="2002" name="Genome Biol.">
        <title>Annotation of the Drosophila melanogaster euchromatic genome: a systematic review.</title>
        <authorList>
            <person name="Misra S."/>
            <person name="Crosby M.A."/>
            <person name="Mungall C.J."/>
            <person name="Matthews B.B."/>
            <person name="Campbell K.S."/>
            <person name="Hradecky P."/>
            <person name="Huang Y."/>
            <person name="Kaminker J.S."/>
            <person name="Millburn G.H."/>
            <person name="Prochnik S.E."/>
            <person name="Smith C.D."/>
            <person name="Tupy J.L."/>
            <person name="Whitfield E.J."/>
            <person name="Bayraktaroglu L."/>
            <person name="Berman B.P."/>
            <person name="Bettencourt B.R."/>
            <person name="Celniker S.E."/>
            <person name="de Grey A.D.N.J."/>
            <person name="Drysdale R.A."/>
            <person name="Harris N.L."/>
            <person name="Richter J."/>
            <person name="Russo S."/>
            <person name="Schroeder A.J."/>
            <person name="Shu S.Q."/>
            <person name="Stapleton M."/>
            <person name="Yamada C."/>
            <person name="Ashburner M."/>
            <person name="Gelbart W.M."/>
            <person name="Rubin G.M."/>
            <person name="Lewis S.E."/>
        </authorList>
    </citation>
    <scope>GENOME REANNOTATION</scope>
    <source>
        <strain>Berkeley</strain>
    </source>
</reference>
<gene>
    <name type="ORF">CG10616</name>
</gene>
<evidence type="ECO:0000250" key="1"/>
<evidence type="ECO:0000255" key="2"/>
<evidence type="ECO:0000256" key="3">
    <source>
        <dbReference type="SAM" id="MobiDB-lite"/>
    </source>
</evidence>
<evidence type="ECO:0000305" key="4"/>
<sequence>MRTVLLSKHDELYLEKCAQENQFSYGIIVGHQADLTKSVVVHLARNNEEDADLEDLSEVRLTISDINSQALASQWLSASKMCPGSFDVIGIFVSSVRSDVVNEQSAEFKNAKKLFSDIYDLLLKSNSSFGVYTTDIAQTDFVFLSYSLADKKVLCKNYSYGNGGTFTNMEFRFVDKPFEWIQLECSYDFDDVLPILDSSRRVNIEDQFQSMIVSVRKNLLASEVFLQNEVVEDTIDLQAYIKKKKTKVDKLQPTSTTGGTATASSNTTDSLPRLASEGIIGGTETIRASIVLPMKCQLSKPTDIKVREFSGTLHMSGIITSKVFCNPRNSIADVKRFLRDDVLRSLITRIQVYCDGLTDPYVTNEALYISEPPRRVFFSLPSEGPSASVGAVVQFSEYLFRGEAPTVVVAQAKQILDVDLDPETISVEAEGLPDDTHFNNCKMDADCIDDSGIMTSSMPKPELSRSLYMVGIAVALLVLLSSVALHFVLAER</sequence>
<comment type="function">
    <text evidence="1">May play a role in the trafficking of a subset of G-protein coupled receptors.</text>
</comment>
<comment type="subcellular location">
    <subcellularLocation>
        <location evidence="4">Membrane</location>
        <topology evidence="4">Single-pass membrane protein</topology>
    </subcellularLocation>
</comment>
<comment type="similarity">
    <text evidence="4">Belongs to the ODR-4 family.</text>
</comment>
<proteinExistence type="inferred from homology"/>
<feature type="chain" id="PRO_0000304690" description="Protein odr-4 homolog">
    <location>
        <begin position="1"/>
        <end position="492"/>
    </location>
</feature>
<feature type="transmembrane region" description="Helical" evidence="2">
    <location>
        <begin position="469"/>
        <end position="489"/>
    </location>
</feature>
<feature type="region of interest" description="Disordered" evidence="3">
    <location>
        <begin position="251"/>
        <end position="270"/>
    </location>
</feature>
<feature type="compositionally biased region" description="Low complexity" evidence="3">
    <location>
        <begin position="254"/>
        <end position="268"/>
    </location>
</feature>
<keyword id="KW-0472">Membrane</keyword>
<keyword id="KW-1185">Reference proteome</keyword>
<keyword id="KW-0812">Transmembrane</keyword>
<keyword id="KW-1133">Transmembrane helix</keyword>